<gene>
    <name type="primary">MT-CYB</name>
    <name type="synonym">COB</name>
    <name type="synonym">CYTB</name>
    <name type="synonym">MTCYB</name>
</gene>
<dbReference type="EMBL" id="AF172833">
    <property type="protein sequence ID" value="AAG27925.1"/>
    <property type="molecule type" value="Genomic_DNA"/>
</dbReference>
<dbReference type="SMR" id="Q9GAW6"/>
<dbReference type="GO" id="GO:0005743">
    <property type="term" value="C:mitochondrial inner membrane"/>
    <property type="evidence" value="ECO:0007669"/>
    <property type="project" value="UniProtKB-SubCell"/>
</dbReference>
<dbReference type="GO" id="GO:0045275">
    <property type="term" value="C:respiratory chain complex III"/>
    <property type="evidence" value="ECO:0007669"/>
    <property type="project" value="InterPro"/>
</dbReference>
<dbReference type="GO" id="GO:0046872">
    <property type="term" value="F:metal ion binding"/>
    <property type="evidence" value="ECO:0007669"/>
    <property type="project" value="UniProtKB-KW"/>
</dbReference>
<dbReference type="GO" id="GO:0008121">
    <property type="term" value="F:ubiquinol-cytochrome-c reductase activity"/>
    <property type="evidence" value="ECO:0007669"/>
    <property type="project" value="InterPro"/>
</dbReference>
<dbReference type="GO" id="GO:0006122">
    <property type="term" value="P:mitochondrial electron transport, ubiquinol to cytochrome c"/>
    <property type="evidence" value="ECO:0007669"/>
    <property type="project" value="TreeGrafter"/>
</dbReference>
<dbReference type="CDD" id="cd00290">
    <property type="entry name" value="cytochrome_b_C"/>
    <property type="match status" value="1"/>
</dbReference>
<dbReference type="CDD" id="cd00284">
    <property type="entry name" value="Cytochrome_b_N"/>
    <property type="match status" value="1"/>
</dbReference>
<dbReference type="FunFam" id="1.20.810.10:FF:000002">
    <property type="entry name" value="Cytochrome b"/>
    <property type="match status" value="1"/>
</dbReference>
<dbReference type="Gene3D" id="1.20.810.10">
    <property type="entry name" value="Cytochrome Bc1 Complex, Chain C"/>
    <property type="match status" value="1"/>
</dbReference>
<dbReference type="InterPro" id="IPR005798">
    <property type="entry name" value="Cyt_b/b6_C"/>
</dbReference>
<dbReference type="InterPro" id="IPR036150">
    <property type="entry name" value="Cyt_b/b6_C_sf"/>
</dbReference>
<dbReference type="InterPro" id="IPR005797">
    <property type="entry name" value="Cyt_b/b6_N"/>
</dbReference>
<dbReference type="InterPro" id="IPR027387">
    <property type="entry name" value="Cytb/b6-like_sf"/>
</dbReference>
<dbReference type="InterPro" id="IPR030689">
    <property type="entry name" value="Cytochrome_b"/>
</dbReference>
<dbReference type="InterPro" id="IPR048260">
    <property type="entry name" value="Cytochrome_b_C_euk/bac"/>
</dbReference>
<dbReference type="InterPro" id="IPR048259">
    <property type="entry name" value="Cytochrome_b_N_euk/bac"/>
</dbReference>
<dbReference type="InterPro" id="IPR016174">
    <property type="entry name" value="Di-haem_cyt_TM"/>
</dbReference>
<dbReference type="PANTHER" id="PTHR19271">
    <property type="entry name" value="CYTOCHROME B"/>
    <property type="match status" value="1"/>
</dbReference>
<dbReference type="PANTHER" id="PTHR19271:SF16">
    <property type="entry name" value="CYTOCHROME B"/>
    <property type="match status" value="1"/>
</dbReference>
<dbReference type="Pfam" id="PF00032">
    <property type="entry name" value="Cytochrom_B_C"/>
    <property type="match status" value="1"/>
</dbReference>
<dbReference type="Pfam" id="PF00033">
    <property type="entry name" value="Cytochrome_B"/>
    <property type="match status" value="1"/>
</dbReference>
<dbReference type="PIRSF" id="PIRSF038885">
    <property type="entry name" value="COB"/>
    <property type="match status" value="1"/>
</dbReference>
<dbReference type="SUPFAM" id="SSF81648">
    <property type="entry name" value="a domain/subunit of cytochrome bc1 complex (Ubiquinol-cytochrome c reductase)"/>
    <property type="match status" value="1"/>
</dbReference>
<dbReference type="SUPFAM" id="SSF81342">
    <property type="entry name" value="Transmembrane di-heme cytochromes"/>
    <property type="match status" value="1"/>
</dbReference>
<dbReference type="PROSITE" id="PS51003">
    <property type="entry name" value="CYTB_CTER"/>
    <property type="match status" value="1"/>
</dbReference>
<dbReference type="PROSITE" id="PS51002">
    <property type="entry name" value="CYTB_NTER"/>
    <property type="match status" value="1"/>
</dbReference>
<evidence type="ECO:0000250" key="1"/>
<evidence type="ECO:0000250" key="2">
    <source>
        <dbReference type="UniProtKB" id="P00157"/>
    </source>
</evidence>
<evidence type="ECO:0000255" key="3">
    <source>
        <dbReference type="PROSITE-ProRule" id="PRU00967"/>
    </source>
</evidence>
<evidence type="ECO:0000255" key="4">
    <source>
        <dbReference type="PROSITE-ProRule" id="PRU00968"/>
    </source>
</evidence>
<reference key="1">
    <citation type="journal article" date="2000" name="J. Mammal.">
        <title>Molecular systematics of Dipodomys elator (Rodentia: Heteromyidae) and its phylogeographic implications.</title>
        <authorList>
            <person name="Mantooth S.J."/>
            <person name="Jones C."/>
            <person name="Bradley R.D."/>
        </authorList>
    </citation>
    <scope>NUCLEOTIDE SEQUENCE [GENOMIC DNA]</scope>
    <source>
        <strain>Isolate Mm2936</strain>
    </source>
</reference>
<protein>
    <recommendedName>
        <fullName>Cytochrome b</fullName>
    </recommendedName>
    <alternativeName>
        <fullName>Complex III subunit 3</fullName>
    </alternativeName>
    <alternativeName>
        <fullName>Complex III subunit III</fullName>
    </alternativeName>
    <alternativeName>
        <fullName>Cytochrome b-c1 complex subunit 3</fullName>
    </alternativeName>
    <alternativeName>
        <fullName>Ubiquinol-cytochrome-c reductase complex cytochrome b subunit</fullName>
    </alternativeName>
</protein>
<keyword id="KW-0249">Electron transport</keyword>
<keyword id="KW-0349">Heme</keyword>
<keyword id="KW-0408">Iron</keyword>
<keyword id="KW-0472">Membrane</keyword>
<keyword id="KW-0479">Metal-binding</keyword>
<keyword id="KW-0496">Mitochondrion</keyword>
<keyword id="KW-0999">Mitochondrion inner membrane</keyword>
<keyword id="KW-0679">Respiratory chain</keyword>
<keyword id="KW-0812">Transmembrane</keyword>
<keyword id="KW-1133">Transmembrane helix</keyword>
<keyword id="KW-0813">Transport</keyword>
<keyword id="KW-0830">Ubiquinone</keyword>
<comment type="function">
    <text evidence="2">Component of the ubiquinol-cytochrome c reductase complex (complex III or cytochrome b-c1 complex) that is part of the mitochondrial respiratory chain. The b-c1 complex mediates electron transfer from ubiquinol to cytochrome c. Contributes to the generation of a proton gradient across the mitochondrial membrane that is then used for ATP synthesis.</text>
</comment>
<comment type="cofactor">
    <cofactor evidence="2">
        <name>heme b</name>
        <dbReference type="ChEBI" id="CHEBI:60344"/>
    </cofactor>
    <text evidence="2">Binds 2 heme b groups non-covalently.</text>
</comment>
<comment type="subunit">
    <text evidence="2">The cytochrome bc1 complex contains 11 subunits: 3 respiratory subunits (MT-CYB, CYC1 and UQCRFS1), 2 core proteins (UQCRC1 and UQCRC2) and 6 low-molecular weight proteins (UQCRH/QCR6, UQCRB/QCR7, UQCRQ/QCR8, UQCR10/QCR9, UQCR11/QCR10 and a cleavage product of UQCRFS1). This cytochrome bc1 complex then forms a dimer.</text>
</comment>
<comment type="subcellular location">
    <subcellularLocation>
        <location evidence="2">Mitochondrion inner membrane</location>
        <topology evidence="2">Multi-pass membrane protein</topology>
    </subcellularLocation>
</comment>
<comment type="miscellaneous">
    <text evidence="1">Heme 1 (or BL or b562) is low-potential and absorbs at about 562 nm, and heme 2 (or BH or b566) is high-potential and absorbs at about 566 nm.</text>
</comment>
<comment type="similarity">
    <text evidence="3 4">Belongs to the cytochrome b family.</text>
</comment>
<comment type="caution">
    <text evidence="2">The full-length protein contains only eight transmembrane helices, not nine as predicted by bioinformatics tools.</text>
</comment>
<feature type="chain" id="PRO_0000061184" description="Cytochrome b">
    <location>
        <begin position="1"/>
        <end position="379"/>
    </location>
</feature>
<feature type="transmembrane region" description="Helical" evidence="2">
    <location>
        <begin position="33"/>
        <end position="53"/>
    </location>
</feature>
<feature type="transmembrane region" description="Helical" evidence="2">
    <location>
        <begin position="77"/>
        <end position="98"/>
    </location>
</feature>
<feature type="transmembrane region" description="Helical" evidence="2">
    <location>
        <begin position="113"/>
        <end position="133"/>
    </location>
</feature>
<feature type="transmembrane region" description="Helical" evidence="2">
    <location>
        <begin position="178"/>
        <end position="198"/>
    </location>
</feature>
<feature type="transmembrane region" description="Helical" evidence="2">
    <location>
        <begin position="226"/>
        <end position="246"/>
    </location>
</feature>
<feature type="transmembrane region" description="Helical" evidence="2">
    <location>
        <begin position="288"/>
        <end position="308"/>
    </location>
</feature>
<feature type="transmembrane region" description="Helical" evidence="2">
    <location>
        <begin position="320"/>
        <end position="340"/>
    </location>
</feature>
<feature type="transmembrane region" description="Helical" evidence="2">
    <location>
        <begin position="347"/>
        <end position="367"/>
    </location>
</feature>
<feature type="binding site" description="axial binding residue" evidence="2">
    <location>
        <position position="83"/>
    </location>
    <ligand>
        <name>heme b</name>
        <dbReference type="ChEBI" id="CHEBI:60344"/>
        <label>b562</label>
    </ligand>
    <ligandPart>
        <name>Fe</name>
        <dbReference type="ChEBI" id="CHEBI:18248"/>
    </ligandPart>
</feature>
<feature type="binding site" description="axial binding residue" evidence="2">
    <location>
        <position position="97"/>
    </location>
    <ligand>
        <name>heme b</name>
        <dbReference type="ChEBI" id="CHEBI:60344"/>
        <label>b566</label>
    </ligand>
    <ligandPart>
        <name>Fe</name>
        <dbReference type="ChEBI" id="CHEBI:18248"/>
    </ligandPart>
</feature>
<feature type="binding site" description="axial binding residue" evidence="2">
    <location>
        <position position="182"/>
    </location>
    <ligand>
        <name>heme b</name>
        <dbReference type="ChEBI" id="CHEBI:60344"/>
        <label>b562</label>
    </ligand>
    <ligandPart>
        <name>Fe</name>
        <dbReference type="ChEBI" id="CHEBI:18248"/>
    </ligandPart>
</feature>
<feature type="binding site" description="axial binding residue" evidence="2">
    <location>
        <position position="196"/>
    </location>
    <ligand>
        <name>heme b</name>
        <dbReference type="ChEBI" id="CHEBI:60344"/>
        <label>b566</label>
    </ligand>
    <ligandPart>
        <name>Fe</name>
        <dbReference type="ChEBI" id="CHEBI:18248"/>
    </ligandPart>
</feature>
<feature type="binding site" evidence="2">
    <location>
        <position position="201"/>
    </location>
    <ligand>
        <name>a ubiquinone</name>
        <dbReference type="ChEBI" id="CHEBI:16389"/>
    </ligand>
</feature>
<name>CYB_MICMC</name>
<sequence length="379" mass="42777">MTIMRKSHPLMKMVNHAFIDLPAPSNISGWWNFGSLLGLCLIIQIVSGLFLAMHYTPDTLTAFSSVTHICRDVNYGWLIRNMHANGASLFFICLYLHIGRGIYYGSYTYMETWNSGIILLFLTMATGFMGKVFPWGQMSFWGATVITNLLSAIPYIGTDLVEWIWGGFSVDKATLNRFFAFHFILPFIIAAMAMVHLLFLHETGSNNPLGIPSDCDKIPFHPYYTTKDFLGMVLLLAFFFTMVLISPDLLGDLDNYSPANPLNTPPHIKPEWYFLFAYAILRSIPNKLGGVVALVLSILVLALFPHIQTANQRSLMFRPISQFLLWMMVSDVLILTWIGGQPVEPPFIIIGQVASLLYFLIILALMPIAGLNENKMIKW</sequence>
<geneLocation type="mitochondrion"/>
<organism>
    <name type="scientific">Microdipodops megacephalus</name>
    <name type="common">Dark kangaroo mouse</name>
    <dbReference type="NCBI Taxonomy" id="108149"/>
    <lineage>
        <taxon>Eukaryota</taxon>
        <taxon>Metazoa</taxon>
        <taxon>Chordata</taxon>
        <taxon>Craniata</taxon>
        <taxon>Vertebrata</taxon>
        <taxon>Euteleostomi</taxon>
        <taxon>Mammalia</taxon>
        <taxon>Eutheria</taxon>
        <taxon>Euarchontoglires</taxon>
        <taxon>Glires</taxon>
        <taxon>Rodentia</taxon>
        <taxon>Castorimorpha</taxon>
        <taxon>Heteromyidae</taxon>
        <taxon>Dipodomyinae</taxon>
        <taxon>Microdipodops</taxon>
    </lineage>
</organism>
<proteinExistence type="inferred from homology"/>
<accession>Q9GAW6</accession>